<protein>
    <recommendedName>
        <fullName>Cytochrome c oxidase subunit 1</fullName>
        <ecNumber>7.1.1.9</ecNumber>
    </recommendedName>
    <alternativeName>
        <fullName>Cytochrome c oxidase polypeptide I</fullName>
    </alternativeName>
</protein>
<reference key="1">
    <citation type="book" date="1993" name="Genetic Maps (6th edition)">
        <title>The mitochondrial genome of Schizosaccharomyces pombe.</title>
        <editorList>
            <person name="O'Brien S.J."/>
        </editorList>
        <authorList>
            <person name="Lang B.F."/>
        </authorList>
    </citation>
    <scope>NUCLEOTIDE SEQUENCE [LARGE SCALE GENOMIC DNA]</scope>
    <source>
        <strain>AD7-50</strain>
    </source>
</reference>
<reference key="2">
    <citation type="journal article" date="1984" name="EMBO J.">
        <title>The mitochondrial genome of the fission yeast Schizosaccharomyces pombe: highly homologous introns are inserted at the same position of the otherwise less conserved cox1 genes in Schizosaccharomyces pombe and Aspergillus nidulans.</title>
        <authorList>
            <person name="Lang B.F."/>
        </authorList>
    </citation>
    <scope>NUCLEOTIDE SEQUENCE [LARGE SCALE GENOMIC DNA] OF 201-537</scope>
    <source>
        <strain>AD7-50</strain>
    </source>
</reference>
<reference key="3">
    <citation type="journal article" date="1986" name="Gene">
        <title>The mosaic cox1 gene in the mitochondrial genome of Schizosaccharomyces pombe: minimal structural requirements and evolution of group I introns.</title>
        <authorList>
            <person name="Trinkl H."/>
            <person name="Wolf K."/>
        </authorList>
    </citation>
    <scope>NUCLEOTIDE SEQUENCE [GENOMIC DNA] OF 136-409</scope>
    <source>
        <strain>EF1</strain>
    </source>
</reference>
<dbReference type="EC" id="7.1.1.9"/>
<dbReference type="EMBL" id="X54421">
    <property type="protein sequence ID" value="CAA38284.1"/>
    <property type="molecule type" value="Genomic_DNA"/>
</dbReference>
<dbReference type="EMBL" id="X00886">
    <property type="protein sequence ID" value="CAA25421.1"/>
    <property type="molecule type" value="Genomic_DNA"/>
</dbReference>
<dbReference type="EMBL" id="AH003563">
    <property type="protein sequence ID" value="AAB00165.1"/>
    <property type="molecule type" value="Genomic_DNA"/>
</dbReference>
<dbReference type="EMBL" id="AH003563">
    <property type="protein sequence ID" value="AAB00164.1"/>
    <property type="molecule type" value="Genomic_DNA"/>
</dbReference>
<dbReference type="EMBL" id="M15669">
    <property type="protein sequence ID" value="AAB00164.1"/>
    <property type="status" value="JOINED"/>
    <property type="molecule type" value="Genomic_DNA"/>
</dbReference>
<dbReference type="PIR" id="S78195">
    <property type="entry name" value="S78195"/>
</dbReference>
<dbReference type="RefSeq" id="NP_039499.1">
    <property type="nucleotide sequence ID" value="NC_001326.1"/>
</dbReference>
<dbReference type="PDB" id="8C8Q">
    <property type="method" value="EM"/>
    <property type="resolution" value="3.36 A"/>
    <property type="chains" value="A=1-537"/>
</dbReference>
<dbReference type="PDB" id="8Q1B">
    <property type="method" value="EM"/>
    <property type="resolution" value="3.40 A"/>
    <property type="chains" value="a=1-537"/>
</dbReference>
<dbReference type="PDBsum" id="8C8Q"/>
<dbReference type="PDBsum" id="8Q1B"/>
<dbReference type="EMDB" id="EMD-16491"/>
<dbReference type="EMDB" id="EMD-18062"/>
<dbReference type="SMR" id="P07657"/>
<dbReference type="ComplexPortal" id="CPX-9641">
    <property type="entry name" value="Mitochondrial respiratory chain complex IV"/>
</dbReference>
<dbReference type="FunCoup" id="P07657">
    <property type="interactions" value="83"/>
</dbReference>
<dbReference type="STRING" id="284812.P07657"/>
<dbReference type="PaxDb" id="4896-SPMIT.01.1"/>
<dbReference type="EnsemblFungi" id="SPMIT.01.1">
    <property type="protein sequence ID" value="SPMIT.01.1:pep"/>
    <property type="gene ID" value="SPMIT.01"/>
</dbReference>
<dbReference type="PomBase" id="SPMIT.01">
    <property type="gene designation" value="cox1"/>
</dbReference>
<dbReference type="VEuPathDB" id="FungiDB:SPMIT.01"/>
<dbReference type="eggNOG" id="KOG4769">
    <property type="taxonomic scope" value="Eukaryota"/>
</dbReference>
<dbReference type="HOGENOM" id="CLU_011899_7_3_1"/>
<dbReference type="InParanoid" id="P07657"/>
<dbReference type="OMA" id="WAMMSIG"/>
<dbReference type="PhylomeDB" id="P07657"/>
<dbReference type="Reactome" id="R-SPO-9837999">
    <property type="pathway name" value="Mitochondrial protein degradation"/>
</dbReference>
<dbReference type="UniPathway" id="UPA00705"/>
<dbReference type="PRO" id="PR:P07657"/>
<dbReference type="Proteomes" id="UP000002485">
    <property type="component" value="Mitochondrion"/>
</dbReference>
<dbReference type="GO" id="GO:0005743">
    <property type="term" value="C:mitochondrial inner membrane"/>
    <property type="evidence" value="ECO:0000305"/>
    <property type="project" value="PomBase"/>
</dbReference>
<dbReference type="GO" id="GO:0045277">
    <property type="term" value="C:respiratory chain complex IV"/>
    <property type="evidence" value="ECO:0000314"/>
    <property type="project" value="PomBase"/>
</dbReference>
<dbReference type="GO" id="GO:0005507">
    <property type="term" value="F:copper ion binding"/>
    <property type="evidence" value="ECO:0000304"/>
    <property type="project" value="PomBase"/>
</dbReference>
<dbReference type="GO" id="GO:0004129">
    <property type="term" value="F:cytochrome-c oxidase activity"/>
    <property type="evidence" value="ECO:0007669"/>
    <property type="project" value="UniProtKB-EC"/>
</dbReference>
<dbReference type="GO" id="GO:0020037">
    <property type="term" value="F:heme binding"/>
    <property type="evidence" value="ECO:0007669"/>
    <property type="project" value="InterPro"/>
</dbReference>
<dbReference type="GO" id="GO:0009060">
    <property type="term" value="P:aerobic respiration"/>
    <property type="evidence" value="ECO:0000318"/>
    <property type="project" value="GO_Central"/>
</dbReference>
<dbReference type="GO" id="GO:0006123">
    <property type="term" value="P:mitochondrial electron transport, cytochrome c to oxygen"/>
    <property type="evidence" value="ECO:0000266"/>
    <property type="project" value="PomBase"/>
</dbReference>
<dbReference type="GO" id="GO:0022904">
    <property type="term" value="P:respiratory electron transport chain"/>
    <property type="evidence" value="ECO:0000318"/>
    <property type="project" value="GO_Central"/>
</dbReference>
<dbReference type="CDD" id="cd01663">
    <property type="entry name" value="Cyt_c_Oxidase_I"/>
    <property type="match status" value="1"/>
</dbReference>
<dbReference type="FunFam" id="1.20.210.10:FF:000004">
    <property type="entry name" value="Cytochrome c oxidase subunit 1"/>
    <property type="match status" value="1"/>
</dbReference>
<dbReference type="Gene3D" id="1.20.210.10">
    <property type="entry name" value="Cytochrome c oxidase-like, subunit I domain"/>
    <property type="match status" value="1"/>
</dbReference>
<dbReference type="InterPro" id="IPR023616">
    <property type="entry name" value="Cyt_c_oxase-like_su1_dom"/>
</dbReference>
<dbReference type="InterPro" id="IPR036927">
    <property type="entry name" value="Cyt_c_oxase-like_su1_sf"/>
</dbReference>
<dbReference type="InterPro" id="IPR000883">
    <property type="entry name" value="Cyt_C_Oxase_1"/>
</dbReference>
<dbReference type="InterPro" id="IPR023615">
    <property type="entry name" value="Cyt_c_Oxase_su1_BS"/>
</dbReference>
<dbReference type="InterPro" id="IPR033944">
    <property type="entry name" value="Cyt_c_oxase_su1_dom"/>
</dbReference>
<dbReference type="PANTHER" id="PTHR10422">
    <property type="entry name" value="CYTOCHROME C OXIDASE SUBUNIT 1"/>
    <property type="match status" value="1"/>
</dbReference>
<dbReference type="PANTHER" id="PTHR10422:SF18">
    <property type="entry name" value="CYTOCHROME C OXIDASE SUBUNIT 1"/>
    <property type="match status" value="1"/>
</dbReference>
<dbReference type="Pfam" id="PF00115">
    <property type="entry name" value="COX1"/>
    <property type="match status" value="1"/>
</dbReference>
<dbReference type="PRINTS" id="PR01165">
    <property type="entry name" value="CYCOXIDASEI"/>
</dbReference>
<dbReference type="SUPFAM" id="SSF81442">
    <property type="entry name" value="Cytochrome c oxidase subunit I-like"/>
    <property type="match status" value="1"/>
</dbReference>
<dbReference type="PROSITE" id="PS50855">
    <property type="entry name" value="COX1"/>
    <property type="match status" value="1"/>
</dbReference>
<dbReference type="PROSITE" id="PS00077">
    <property type="entry name" value="COX1_CUB"/>
    <property type="match status" value="1"/>
</dbReference>
<evidence type="ECO:0000250" key="1">
    <source>
        <dbReference type="UniProtKB" id="P00396"/>
    </source>
</evidence>
<evidence type="ECO:0000250" key="2">
    <source>
        <dbReference type="UniProtKB" id="P00401"/>
    </source>
</evidence>
<evidence type="ECO:0000255" key="3"/>
<evidence type="ECO:0000305" key="4"/>
<evidence type="ECO:0007829" key="5">
    <source>
        <dbReference type="PDB" id="8C8Q"/>
    </source>
</evidence>
<accession>P07657</accession>
<feature type="chain" id="PRO_0000183414" description="Cytochrome c oxidase subunit 1">
    <location>
        <begin position="1"/>
        <end position="537"/>
    </location>
</feature>
<feature type="transmembrane region" description="Helical" evidence="3">
    <location>
        <begin position="22"/>
        <end position="42"/>
    </location>
</feature>
<feature type="transmembrane region" description="Helical" evidence="3">
    <location>
        <begin position="70"/>
        <end position="90"/>
    </location>
</feature>
<feature type="transmembrane region" description="Helical" evidence="3">
    <location>
        <begin position="104"/>
        <end position="124"/>
    </location>
</feature>
<feature type="transmembrane region" description="Helical" evidence="3">
    <location>
        <begin position="152"/>
        <end position="172"/>
    </location>
</feature>
<feature type="transmembrane region" description="Helical" evidence="3">
    <location>
        <begin position="190"/>
        <end position="210"/>
    </location>
</feature>
<feature type="transmembrane region" description="Helical" evidence="3">
    <location>
        <begin position="241"/>
        <end position="261"/>
    </location>
</feature>
<feature type="transmembrane region" description="Helical" evidence="3">
    <location>
        <begin position="279"/>
        <end position="299"/>
    </location>
</feature>
<feature type="transmembrane region" description="Helical" evidence="3">
    <location>
        <begin position="318"/>
        <end position="338"/>
    </location>
</feature>
<feature type="transmembrane region" description="Helical" evidence="3">
    <location>
        <begin position="345"/>
        <end position="365"/>
    </location>
</feature>
<feature type="transmembrane region" description="Helical" evidence="3">
    <location>
        <begin position="379"/>
        <end position="399"/>
    </location>
</feature>
<feature type="transmembrane region" description="Helical" evidence="3">
    <location>
        <begin position="418"/>
        <end position="438"/>
    </location>
</feature>
<feature type="transmembrane region" description="Helical" evidence="3">
    <location>
        <begin position="458"/>
        <end position="478"/>
    </location>
</feature>
<feature type="binding site" evidence="2">
    <location>
        <position position="45"/>
    </location>
    <ligand>
        <name>Ca(2+)</name>
        <dbReference type="ChEBI" id="CHEBI:29108"/>
    </ligand>
</feature>
<feature type="binding site" evidence="2">
    <location>
        <position position="48"/>
    </location>
    <ligand>
        <name>Ca(2+)</name>
        <dbReference type="ChEBI" id="CHEBI:29108"/>
    </ligand>
</feature>
<feature type="binding site" evidence="2">
    <location>
        <position position="50"/>
    </location>
    <ligand>
        <name>Ca(2+)</name>
        <dbReference type="ChEBI" id="CHEBI:29108"/>
    </ligand>
</feature>
<feature type="binding site" description="axial binding residue" evidence="2">
    <location>
        <position position="68"/>
    </location>
    <ligand>
        <name>Fe(II)-heme a</name>
        <dbReference type="ChEBI" id="CHEBI:61715"/>
        <note>low-spin</note>
    </ligand>
    <ligandPart>
        <name>Fe</name>
        <dbReference type="ChEBI" id="CHEBI:18248"/>
    </ligandPart>
</feature>
<feature type="binding site" evidence="2">
    <location>
        <position position="247"/>
    </location>
    <ligand>
        <name>Cu cation</name>
        <dbReference type="ChEBI" id="CHEBI:23378"/>
        <label>B</label>
    </ligand>
</feature>
<feature type="binding site" evidence="1">
    <location>
        <position position="251"/>
    </location>
    <ligand>
        <name>O2</name>
        <dbReference type="ChEBI" id="CHEBI:15379"/>
    </ligand>
</feature>
<feature type="binding site" evidence="2">
    <location>
        <position position="296"/>
    </location>
    <ligand>
        <name>Cu cation</name>
        <dbReference type="ChEBI" id="CHEBI:23378"/>
        <label>B</label>
    </ligand>
</feature>
<feature type="binding site" evidence="2">
    <location>
        <position position="297"/>
    </location>
    <ligand>
        <name>Cu cation</name>
        <dbReference type="ChEBI" id="CHEBI:23378"/>
        <label>B</label>
    </ligand>
</feature>
<feature type="binding site" evidence="2">
    <location>
        <position position="375"/>
    </location>
    <ligand>
        <name>Mg(2+)</name>
        <dbReference type="ChEBI" id="CHEBI:18420"/>
        <note>ligand shared with subunit 2</note>
    </ligand>
</feature>
<feature type="binding site" evidence="2">
    <location>
        <position position="376"/>
    </location>
    <ligand>
        <name>Mg(2+)</name>
        <dbReference type="ChEBI" id="CHEBI:18420"/>
        <note>ligand shared with subunit 2</note>
    </ligand>
</feature>
<feature type="binding site" description="axial binding residue" evidence="2">
    <location>
        <position position="383"/>
    </location>
    <ligand>
        <name>heme a3</name>
        <dbReference type="ChEBI" id="CHEBI:83282"/>
        <note>high-spin</note>
    </ligand>
    <ligandPart>
        <name>Fe</name>
        <dbReference type="ChEBI" id="CHEBI:18248"/>
    </ligandPart>
</feature>
<feature type="binding site" description="axial binding residue" evidence="2">
    <location>
        <position position="385"/>
    </location>
    <ligand>
        <name>Fe(II)-heme a</name>
        <dbReference type="ChEBI" id="CHEBI:61715"/>
        <note>low-spin</note>
    </ligand>
    <ligandPart>
        <name>Fe</name>
        <dbReference type="ChEBI" id="CHEBI:18248"/>
    </ligandPart>
</feature>
<feature type="binding site" evidence="2">
    <location>
        <position position="447"/>
    </location>
    <ligand>
        <name>Ca(2+)</name>
        <dbReference type="ChEBI" id="CHEBI:29108"/>
    </ligand>
</feature>
<feature type="cross-link" description="1'-histidyl-3'-tyrosine (His-Tyr)" evidence="2">
    <location>
        <begin position="247"/>
        <end position="251"/>
    </location>
</feature>
<feature type="sequence conflict" description="In Ref. 3; AAB00165." evidence="4" ref="3">
    <original>Y</original>
    <variation>YY</variation>
    <location>
        <position position="401"/>
    </location>
</feature>
<feature type="helix" evidence="5">
    <location>
        <begin position="3"/>
        <end position="11"/>
    </location>
</feature>
<feature type="helix" evidence="5">
    <location>
        <begin position="18"/>
        <end position="45"/>
    </location>
</feature>
<feature type="strand" evidence="5">
    <location>
        <begin position="47"/>
        <end position="50"/>
    </location>
</feature>
<feature type="helix" evidence="5">
    <location>
        <begin position="59"/>
        <end position="74"/>
    </location>
</feature>
<feature type="helix" evidence="5">
    <location>
        <begin position="77"/>
        <end position="81"/>
    </location>
</feature>
<feature type="helix" evidence="5">
    <location>
        <begin position="84"/>
        <end position="88"/>
    </location>
</feature>
<feature type="helix" evidence="5">
    <location>
        <begin position="90"/>
        <end position="94"/>
    </location>
</feature>
<feature type="helix" evidence="5">
    <location>
        <begin position="102"/>
        <end position="109"/>
    </location>
</feature>
<feature type="helix" evidence="5">
    <location>
        <begin position="112"/>
        <end position="123"/>
    </location>
</feature>
<feature type="strand" evidence="5">
    <location>
        <begin position="125"/>
        <end position="127"/>
    </location>
</feature>
<feature type="helix" evidence="5">
    <location>
        <begin position="138"/>
        <end position="140"/>
    </location>
</feature>
<feature type="turn" evidence="5">
    <location>
        <begin position="142"/>
        <end position="144"/>
    </location>
</feature>
<feature type="turn" evidence="5">
    <location>
        <begin position="148"/>
        <end position="151"/>
    </location>
</feature>
<feature type="helix" evidence="5">
    <location>
        <begin position="152"/>
        <end position="177"/>
    </location>
</feature>
<feature type="helix" evidence="5">
    <location>
        <begin position="190"/>
        <end position="221"/>
    </location>
</feature>
<feature type="turn" evidence="5">
    <location>
        <begin position="229"/>
        <end position="232"/>
    </location>
</feature>
<feature type="helix" evidence="5">
    <location>
        <begin position="237"/>
        <end position="246"/>
    </location>
</feature>
<feature type="helix" evidence="5">
    <location>
        <begin position="248"/>
        <end position="252"/>
    </location>
</feature>
<feature type="helix" evidence="5">
    <location>
        <begin position="255"/>
        <end position="269"/>
    </location>
</feature>
<feature type="helix" evidence="5">
    <location>
        <begin position="276"/>
        <end position="289"/>
    </location>
</feature>
<feature type="helix" evidence="5">
    <location>
        <begin position="295"/>
        <end position="297"/>
    </location>
</feature>
<feature type="strand" evidence="5">
    <location>
        <begin position="299"/>
        <end position="301"/>
    </location>
</feature>
<feature type="helix" evidence="5">
    <location>
        <begin position="305"/>
        <end position="316"/>
    </location>
</feature>
<feature type="helix" evidence="5">
    <location>
        <begin position="319"/>
        <end position="333"/>
    </location>
</feature>
<feature type="helix" evidence="5">
    <location>
        <begin position="343"/>
        <end position="364"/>
    </location>
</feature>
<feature type="helix" evidence="5">
    <location>
        <begin position="368"/>
        <end position="371"/>
    </location>
</feature>
<feature type="turn" evidence="5">
    <location>
        <begin position="372"/>
        <end position="376"/>
    </location>
</feature>
<feature type="helix" evidence="5">
    <location>
        <begin position="378"/>
        <end position="391"/>
    </location>
</feature>
<feature type="helix" evidence="5">
    <location>
        <begin position="393"/>
        <end position="407"/>
    </location>
</feature>
<feature type="helix" evidence="5">
    <location>
        <begin position="413"/>
        <end position="431"/>
    </location>
</feature>
<feature type="helix" evidence="5">
    <location>
        <begin position="433"/>
        <end position="439"/>
    </location>
</feature>
<feature type="strand" evidence="5">
    <location>
        <begin position="443"/>
        <end position="445"/>
    </location>
</feature>
<feature type="helix" evidence="5">
    <location>
        <begin position="455"/>
        <end position="482"/>
    </location>
</feature>
<feature type="helix" evidence="5">
    <location>
        <begin position="504"/>
        <end position="508"/>
    </location>
</feature>
<feature type="strand" evidence="5">
    <location>
        <begin position="511"/>
        <end position="515"/>
    </location>
</feature>
<feature type="helix" evidence="5">
    <location>
        <begin position="516"/>
        <end position="518"/>
    </location>
</feature>
<feature type="strand" evidence="5">
    <location>
        <begin position="534"/>
        <end position="536"/>
    </location>
</feature>
<proteinExistence type="evidence at protein level"/>
<geneLocation type="mitochondrion"/>
<sequence length="537" mass="59412">MNSWWTYVNRWIFSTNAKDIAILYLLFGLVSGIIGSVFSFIIRMELSAPGSQFLSGNGQLYNVAISAHGILMIFFFIIPALFGAFGNYLVPLMIGAPDVAYPRVNNFTFWLLPPALMLLLISALTEEGPGGGWTVYPPLSSITSHSGPAIDLAILSLQLTGISSTLGSVNLIATMINMRAPGLSLYQMPLFAWAIMITSILLLLTLPVLAGGLFMLFSDRNLNTSFYAPEGGGDPVLYQHLFWFFGHPEVYILIMPAFGVVSHIIPSLAHKPIFGKEGMLWAMLSIALLGLMVWSHHLFTVGLDVDTRAYFSAATMVIAIPTGIKIFSWLATLTGGAIQWSRVPMLYAIGFLILFTIGGLTGVILSNSVLDIAFHDTYFVVAHFHYVLSMGALFGLCGAYYWSPKMFGLMYNETLASIQFWILFIGVNIVFGPQHFLGLNGMPRRIPDYPEAFVGWNFVSSIGSVISILSLFLFMYVMYDQFTSNRVVKTNPYLIPSYFDDNVIFVNEKLGVAQSIEWLLHSPVHEHAFNTLPTKSI</sequence>
<keyword id="KW-0002">3D-structure</keyword>
<keyword id="KW-0106">Calcium</keyword>
<keyword id="KW-0186">Copper</keyword>
<keyword id="KW-0249">Electron transport</keyword>
<keyword id="KW-0349">Heme</keyword>
<keyword id="KW-0408">Iron</keyword>
<keyword id="KW-0460">Magnesium</keyword>
<keyword id="KW-0472">Membrane</keyword>
<keyword id="KW-0479">Metal-binding</keyword>
<keyword id="KW-0496">Mitochondrion</keyword>
<keyword id="KW-0999">Mitochondrion inner membrane</keyword>
<keyword id="KW-1185">Reference proteome</keyword>
<keyword id="KW-0679">Respiratory chain</keyword>
<keyword id="KW-1278">Translocase</keyword>
<keyword id="KW-0812">Transmembrane</keyword>
<keyword id="KW-1133">Transmembrane helix</keyword>
<keyword id="KW-0813">Transport</keyword>
<comment type="function">
    <text evidence="2">Component of the cytochrome c oxidase, the last enzyme in the mitochondrial electron transport chain which drives oxidative phosphorylation. The respiratory chain contains 3 multisubunit complexes succinate dehydrogenase (complex II, CII), ubiquinol-cytochrome c oxidoreductase (cytochrome b-c1 complex, complex III, CIII) and cytochrome c oxidase (complex IV, CIV), that cooperate to transfer electrons derived from NADH and succinate to molecular oxygen, creating an electrochemical gradient over the inner membrane that drives transmembrane transport and the ATP synthase. Cytochrome c oxidase is the component of the respiratory chain that catalyzes the reduction of oxygen to water. Electrons originating from reduced cytochrome c in the intermembrane space (IMS) are transferred via the dinuclear copper A center (CU(A)) of subunit 2 and heme A of subunit 1 to the active site in subunit 1, a binuclear center (BNC) formed by heme A3 and copper B (CU(B)). The BNC reduces molecular oxygen to 2 water molecules using 4 electrons from cytochrome c in the IMS and 4 protons from the mitochondrial matrix.</text>
</comment>
<comment type="catalytic activity">
    <reaction evidence="2">
        <text>4 Fe(II)-[cytochrome c] + O2 + 8 H(+)(in) = 4 Fe(III)-[cytochrome c] + 2 H2O + 4 H(+)(out)</text>
        <dbReference type="Rhea" id="RHEA:11436"/>
        <dbReference type="Rhea" id="RHEA-COMP:10350"/>
        <dbReference type="Rhea" id="RHEA-COMP:14399"/>
        <dbReference type="ChEBI" id="CHEBI:15377"/>
        <dbReference type="ChEBI" id="CHEBI:15378"/>
        <dbReference type="ChEBI" id="CHEBI:15379"/>
        <dbReference type="ChEBI" id="CHEBI:29033"/>
        <dbReference type="ChEBI" id="CHEBI:29034"/>
        <dbReference type="EC" id="7.1.1.9"/>
    </reaction>
    <physiologicalReaction direction="left-to-right" evidence="2">
        <dbReference type="Rhea" id="RHEA:11437"/>
    </physiologicalReaction>
</comment>
<comment type="cofactor">
    <cofactor evidence="2">
        <name>heme</name>
        <dbReference type="ChEBI" id="CHEBI:30413"/>
    </cofactor>
    <text evidence="2">Binds 2 heme A groups non-covalently per subunit.</text>
</comment>
<comment type="cofactor">
    <cofactor evidence="2">
        <name>Cu cation</name>
        <dbReference type="ChEBI" id="CHEBI:23378"/>
    </cofactor>
    <text evidence="2">Binds a copper B center.</text>
</comment>
<comment type="pathway">
    <text evidence="2">Energy metabolism; oxidative phosphorylation.</text>
</comment>
<comment type="subunit">
    <text evidence="2">Component of the cytochrome c oxidase (complex IV, CIV), a multisubunit enzyme composed of a catalytic core of 3 subunits and several supernumerary subunits. The complex exists as a monomer or a dimer and forms supercomplexes (SCs) in the inner mitochondrial membrane with ubiquinol-cytochrome c oxidoreductase (cytochrome b-c1 complex, complex III, CIII).</text>
</comment>
<comment type="subcellular location">
    <subcellularLocation>
        <location evidence="2">Mitochondrion inner membrane</location>
        <topology evidence="2">Multi-pass membrane protein</topology>
    </subcellularLocation>
</comment>
<comment type="similarity">
    <text evidence="4">Belongs to the heme-copper respiratory oxidase family.</text>
</comment>
<name>COX1_SCHPO</name>
<organism>
    <name type="scientific">Schizosaccharomyces pombe (strain 972 / ATCC 24843)</name>
    <name type="common">Fission yeast</name>
    <dbReference type="NCBI Taxonomy" id="284812"/>
    <lineage>
        <taxon>Eukaryota</taxon>
        <taxon>Fungi</taxon>
        <taxon>Dikarya</taxon>
        <taxon>Ascomycota</taxon>
        <taxon>Taphrinomycotina</taxon>
        <taxon>Schizosaccharomycetes</taxon>
        <taxon>Schizosaccharomycetales</taxon>
        <taxon>Schizosaccharomycetaceae</taxon>
        <taxon>Schizosaccharomyces</taxon>
    </lineage>
</organism>
<gene>
    <name type="primary">cox1</name>
    <name type="ORF">SPMIT.01</name>
</gene>